<name>BLT3B_XENLA</name>
<reference key="1">
    <citation type="submission" date="2004-05" db="EMBL/GenBank/DDBJ databases">
        <authorList>
            <consortium name="NIH - Xenopus Gene Collection (XGC) project"/>
        </authorList>
    </citation>
    <scope>NUCLEOTIDE SEQUENCE [LARGE SCALE MRNA]</scope>
    <source>
        <tissue>Liver</tissue>
    </source>
</reference>
<evidence type="ECO:0000250" key="1">
    <source>
        <dbReference type="UniProtKB" id="A0JNW5"/>
    </source>
</evidence>
<evidence type="ECO:0000255" key="2"/>
<evidence type="ECO:0000256" key="3">
    <source>
        <dbReference type="SAM" id="MobiDB-lite"/>
    </source>
</evidence>
<dbReference type="EMBL" id="BC070564">
    <property type="protein sequence ID" value="AAH70564.1"/>
    <property type="molecule type" value="mRNA"/>
</dbReference>
<dbReference type="RefSeq" id="NP_001084948.1">
    <property type="nucleotide sequence ID" value="NM_001091479.1"/>
</dbReference>
<dbReference type="SMR" id="Q6NRZ1"/>
<dbReference type="DNASU" id="432006"/>
<dbReference type="GeneID" id="432006"/>
<dbReference type="KEGG" id="xla:432006"/>
<dbReference type="AGR" id="Xenbase:XB-GENE-5895281"/>
<dbReference type="CTD" id="432006"/>
<dbReference type="Xenbase" id="XB-GENE-5895281">
    <property type="gene designation" value="bltp3b.L"/>
</dbReference>
<dbReference type="OrthoDB" id="43807at2759"/>
<dbReference type="Proteomes" id="UP000186698">
    <property type="component" value="Chromosome 3L"/>
</dbReference>
<dbReference type="Bgee" id="432006">
    <property type="expression patterns" value="Expressed in liver and 19 other cell types or tissues"/>
</dbReference>
<dbReference type="GO" id="GO:0005829">
    <property type="term" value="C:cytosol"/>
    <property type="evidence" value="ECO:0007669"/>
    <property type="project" value="UniProtKB-SubCell"/>
</dbReference>
<dbReference type="GO" id="GO:0005769">
    <property type="term" value="C:early endosome"/>
    <property type="evidence" value="ECO:0000250"/>
    <property type="project" value="UniProtKB"/>
</dbReference>
<dbReference type="GO" id="GO:0120013">
    <property type="term" value="F:lipid transfer activity"/>
    <property type="evidence" value="ECO:0000250"/>
    <property type="project" value="UniProtKB"/>
</dbReference>
<dbReference type="GO" id="GO:0034498">
    <property type="term" value="P:early endosome to Golgi transport"/>
    <property type="evidence" value="ECO:0000250"/>
    <property type="project" value="UniProtKB"/>
</dbReference>
<dbReference type="GO" id="GO:0120009">
    <property type="term" value="P:intermembrane lipid transfer"/>
    <property type="evidence" value="ECO:0000250"/>
    <property type="project" value="UniProtKB"/>
</dbReference>
<dbReference type="InterPro" id="IPR026728">
    <property type="entry name" value="BLTP3A/B"/>
</dbReference>
<dbReference type="PANTHER" id="PTHR22774:SF17">
    <property type="entry name" value="BRIDGE-LIKE LIPID TRANSFER PROTEIN FAMILY MEMBER 3B"/>
    <property type="match status" value="1"/>
</dbReference>
<dbReference type="PANTHER" id="PTHR22774">
    <property type="entry name" value="CHOREIN N-TERMINAL DOMAIN-CONTAINING PROTEIN"/>
    <property type="match status" value="1"/>
</dbReference>
<dbReference type="Pfam" id="PF24917">
    <property type="entry name" value="BLTP3A_B"/>
    <property type="match status" value="1"/>
</dbReference>
<proteinExistence type="evidence at transcript level"/>
<gene>
    <name type="primary">bltp3b</name>
    <name type="synonym">uhrf1bp1l</name>
</gene>
<keyword id="KW-0175">Coiled coil</keyword>
<keyword id="KW-0963">Cytoplasm</keyword>
<keyword id="KW-0967">Endosome</keyword>
<keyword id="KW-1185">Reference proteome</keyword>
<sequence length="1415" mass="159482">MAGLIKKQILKHLSRFTKNLSPDKINLSTLKGEGQLTNLELDEEVLQNMLDLPTWLAINKVFCNKAAIRIPWTKLKTHPISLSLDKVIMEMSTCEEPRSCNGPSPLVTASGQSEYGFAEKVVEGISLSVNSIIIRIRAKAFNASFELSQLRIYSVNPSWQHGDLRFTRIQDPQRGEVLTFKEINWQMIRIEADAIQSCDHEIMSAPVRLITNQSKIRITLKRRLKDCNVVASKLIFMLDDLLWVLTDSQLKAMVQYAKSLSEAIEKSTEQRKSMASETTQSPTPPVSSQQVKNPQTSTTPEQNNAILKLFRDFDVKETSYHLVISHLDLHICDDIHSKEKAFVRRVTGGAMQLSFSQLTVDYYPYHREGDGCSHWMHYGDATKTRCSWAQELLHEFNSNIEMLRQAVKDHNPSSPIRTVPNASQQYGQTGFDQNVKRSSPTAFGEPPKSNPLSSSFVVRLADFNIFQVSTADQCRSSPKTMISCNKKSLYLPQEMSAIHIEFTEYYFPDGKNFPIPSPNLYVQLNALQFTLDEKSVLWLNQFVLDLRQSLDQFVAMYKLSDNSKSDEHVDIRVDGLMLKFIIPSQKKQDCHPDQPAGISIQTSEMIGSNTRQTANCRRSDLEAIFQDFKDYDFYSKNFTSFPRSHDHFDILHPIFQRHAFEQDTKMHDIYKGLVAPTLDTNALSTSAARDIWAIHFTQFWVDYEGIKSGKGRPVVFIDSFPFSIWICQPRRFLQSQKRTLCDGDPLQSISKSESTDFVGRLQRKKLLKQYYSTELGGSNTPLQKSQSLDSSLANPPTCKQTDADIHVLAHVQKHVSLQINHYQYIFLLLLQESIKQILENVKKDVEEVTGKPDDENKISVGLLLKSADVSLLLLPLPEDNSKSPLPCEGSPVTDHKLPSPSEGVTGDLIINNNVDLINKAIFESDLKGDPQKIVATDPLLSKSSSDTELLKRSPPYLDSTADKDLLEAELAFGQQIDRNNLKEDPGANIDISSSFLIHPLNNHINSNGPDHALAEDQFASPLLPEVEKKQLVDTSGIPKERCLPNLSVSYKNMKRSPSQFSLDNISIDSNLLDEQMIESDGSDHLEVGMEDFSSLNYPCTAETSSVELRNEEYCVSSPDAISAETSQDSRQDLMSVLVLKVVGINCGIDIKGEDATICLQINRVVPNQLGNVSVWQYLNSRNTGSDQKSTTDERKSSPEISLRLEIGPSARRHSPLAAENGFLQCNVSNFSSEFLTSTLANIHHFVEEDSVPEIMPMKIQVQNARIHLQDDSPRNNNTDPDPEPVVLNIENLFVERRDDGSFWIRGSPDTSLNSPWNHKETSSILQLDCSKSHSTNSKSKTSKFTQTISEHTSLPEIPDVINNQAWKAAGISKEQLVEENECLKQELAKTKMALAESHMERDRLLHQLKRVHIEK</sequence>
<organism>
    <name type="scientific">Xenopus laevis</name>
    <name type="common">African clawed frog</name>
    <dbReference type="NCBI Taxonomy" id="8355"/>
    <lineage>
        <taxon>Eukaryota</taxon>
        <taxon>Metazoa</taxon>
        <taxon>Chordata</taxon>
        <taxon>Craniata</taxon>
        <taxon>Vertebrata</taxon>
        <taxon>Euteleostomi</taxon>
        <taxon>Amphibia</taxon>
        <taxon>Batrachia</taxon>
        <taxon>Anura</taxon>
        <taxon>Pipoidea</taxon>
        <taxon>Pipidae</taxon>
        <taxon>Xenopodinae</taxon>
        <taxon>Xenopus</taxon>
        <taxon>Xenopus</taxon>
    </lineage>
</organism>
<protein>
    <recommendedName>
        <fullName>Bridge-like lipid transfer protein family member 3B</fullName>
    </recommendedName>
    <alternativeName>
        <fullName>UHRF1-binding protein 1-like</fullName>
    </alternativeName>
</protein>
<feature type="chain" id="PRO_0000295721" description="Bridge-like lipid transfer protein family member 3B">
    <location>
        <begin position="1"/>
        <end position="1415"/>
    </location>
</feature>
<feature type="domain" description="Chorein N-terminal" evidence="2">
    <location>
        <begin position="3"/>
        <end position="94"/>
    </location>
</feature>
<feature type="region of interest" description="Disordered" evidence="3">
    <location>
        <begin position="267"/>
        <end position="300"/>
    </location>
</feature>
<feature type="region of interest" description="Disordered" evidence="3">
    <location>
        <begin position="882"/>
        <end position="904"/>
    </location>
</feature>
<feature type="coiled-coil region" evidence="2">
    <location>
        <begin position="1367"/>
        <end position="1404"/>
    </location>
</feature>
<feature type="compositionally biased region" description="Polar residues" evidence="3">
    <location>
        <begin position="275"/>
        <end position="300"/>
    </location>
</feature>
<accession>Q6NRZ1</accession>
<comment type="function">
    <text evidence="1">Tube-forming lipid transport protein which mediates the transfer of lipids between membranes at organelle contact sites. Required for retrograde traffic of vesicle clusters in the early endocytic pathway to the Golgi complex.</text>
</comment>
<comment type="subcellular location">
    <subcellularLocation>
        <location evidence="1">Cytoplasm</location>
        <location evidence="1">Cytosol</location>
    </subcellularLocation>
    <subcellularLocation>
        <location evidence="1">Early endosome</location>
    </subcellularLocation>
    <text evidence="1">Localizes on a subpopulation of vesicle clusters in the early endocytic pathway.</text>
</comment>